<feature type="chain" id="PRO_1000116000" description="Probable GTP-binding protein EngB">
    <location>
        <begin position="1"/>
        <end position="210"/>
    </location>
</feature>
<feature type="domain" description="EngB-type G" evidence="1">
    <location>
        <begin position="25"/>
        <end position="199"/>
    </location>
</feature>
<feature type="binding site" evidence="1">
    <location>
        <begin position="33"/>
        <end position="40"/>
    </location>
    <ligand>
        <name>GTP</name>
        <dbReference type="ChEBI" id="CHEBI:37565"/>
    </ligand>
</feature>
<feature type="binding site" evidence="1">
    <location>
        <position position="40"/>
    </location>
    <ligand>
        <name>Mg(2+)</name>
        <dbReference type="ChEBI" id="CHEBI:18420"/>
    </ligand>
</feature>
<feature type="binding site" evidence="1">
    <location>
        <begin position="60"/>
        <end position="64"/>
    </location>
    <ligand>
        <name>GTP</name>
        <dbReference type="ChEBI" id="CHEBI:37565"/>
    </ligand>
</feature>
<feature type="binding site" evidence="1">
    <location>
        <position position="62"/>
    </location>
    <ligand>
        <name>Mg(2+)</name>
        <dbReference type="ChEBI" id="CHEBI:18420"/>
    </ligand>
</feature>
<feature type="binding site" evidence="1">
    <location>
        <begin position="78"/>
        <end position="81"/>
    </location>
    <ligand>
        <name>GTP</name>
        <dbReference type="ChEBI" id="CHEBI:37565"/>
    </ligand>
</feature>
<feature type="binding site" evidence="1">
    <location>
        <begin position="145"/>
        <end position="148"/>
    </location>
    <ligand>
        <name>GTP</name>
        <dbReference type="ChEBI" id="CHEBI:37565"/>
    </ligand>
</feature>
<feature type="binding site" evidence="1">
    <location>
        <begin position="178"/>
        <end position="180"/>
    </location>
    <ligand>
        <name>GTP</name>
        <dbReference type="ChEBI" id="CHEBI:37565"/>
    </ligand>
</feature>
<name>ENGB_SALA4</name>
<comment type="function">
    <text evidence="1">Necessary for normal cell division and for the maintenance of normal septation.</text>
</comment>
<comment type="cofactor">
    <cofactor evidence="1">
        <name>Mg(2+)</name>
        <dbReference type="ChEBI" id="CHEBI:18420"/>
    </cofactor>
</comment>
<comment type="similarity">
    <text evidence="1">Belongs to the TRAFAC class TrmE-Era-EngA-EngB-Septin-like GTPase superfamily. EngB GTPase family.</text>
</comment>
<dbReference type="EMBL" id="CP001138">
    <property type="protein sequence ID" value="ACH52808.1"/>
    <property type="molecule type" value="Genomic_DNA"/>
</dbReference>
<dbReference type="SMR" id="B5EZX3"/>
<dbReference type="KEGG" id="sea:SeAg_B4233"/>
<dbReference type="HOGENOM" id="CLU_033732_1_0_6"/>
<dbReference type="Proteomes" id="UP000008819">
    <property type="component" value="Chromosome"/>
</dbReference>
<dbReference type="GO" id="GO:0005829">
    <property type="term" value="C:cytosol"/>
    <property type="evidence" value="ECO:0007669"/>
    <property type="project" value="TreeGrafter"/>
</dbReference>
<dbReference type="GO" id="GO:0005525">
    <property type="term" value="F:GTP binding"/>
    <property type="evidence" value="ECO:0007669"/>
    <property type="project" value="UniProtKB-UniRule"/>
</dbReference>
<dbReference type="GO" id="GO:0046872">
    <property type="term" value="F:metal ion binding"/>
    <property type="evidence" value="ECO:0007669"/>
    <property type="project" value="UniProtKB-KW"/>
</dbReference>
<dbReference type="GO" id="GO:0000917">
    <property type="term" value="P:division septum assembly"/>
    <property type="evidence" value="ECO:0007669"/>
    <property type="project" value="UniProtKB-KW"/>
</dbReference>
<dbReference type="CDD" id="cd01876">
    <property type="entry name" value="YihA_EngB"/>
    <property type="match status" value="1"/>
</dbReference>
<dbReference type="FunFam" id="3.40.50.300:FF:000098">
    <property type="entry name" value="Probable GTP-binding protein EngB"/>
    <property type="match status" value="1"/>
</dbReference>
<dbReference type="Gene3D" id="3.40.50.300">
    <property type="entry name" value="P-loop containing nucleotide triphosphate hydrolases"/>
    <property type="match status" value="1"/>
</dbReference>
<dbReference type="HAMAP" id="MF_00321">
    <property type="entry name" value="GTPase_EngB"/>
    <property type="match status" value="1"/>
</dbReference>
<dbReference type="InterPro" id="IPR030393">
    <property type="entry name" value="G_ENGB_dom"/>
</dbReference>
<dbReference type="InterPro" id="IPR006073">
    <property type="entry name" value="GTP-bd"/>
</dbReference>
<dbReference type="InterPro" id="IPR019987">
    <property type="entry name" value="GTP-bd_ribosome_bio_YsxC"/>
</dbReference>
<dbReference type="InterPro" id="IPR027417">
    <property type="entry name" value="P-loop_NTPase"/>
</dbReference>
<dbReference type="NCBIfam" id="TIGR03598">
    <property type="entry name" value="GTPase_YsxC"/>
    <property type="match status" value="1"/>
</dbReference>
<dbReference type="PANTHER" id="PTHR11649:SF13">
    <property type="entry name" value="ENGB-TYPE G DOMAIN-CONTAINING PROTEIN"/>
    <property type="match status" value="1"/>
</dbReference>
<dbReference type="PANTHER" id="PTHR11649">
    <property type="entry name" value="MSS1/TRME-RELATED GTP-BINDING PROTEIN"/>
    <property type="match status" value="1"/>
</dbReference>
<dbReference type="Pfam" id="PF01926">
    <property type="entry name" value="MMR_HSR1"/>
    <property type="match status" value="1"/>
</dbReference>
<dbReference type="SUPFAM" id="SSF52540">
    <property type="entry name" value="P-loop containing nucleoside triphosphate hydrolases"/>
    <property type="match status" value="1"/>
</dbReference>
<dbReference type="PROSITE" id="PS51706">
    <property type="entry name" value="G_ENGB"/>
    <property type="match status" value="1"/>
</dbReference>
<accession>B5EZX3</accession>
<gene>
    <name evidence="1" type="primary">engB</name>
    <name type="ordered locus">SeAg_B4233</name>
</gene>
<sequence length="210" mass="23554">MTNLNYQQTHFVMSAPDIRHLPSDCGIEVAFAGRSNAGKSSALNTLTNQKSLARTSKTPGRTQLINLFEVVDGKRLVDLPGYGYAEVPEEMKRKWQRALGEYLEKRQSLQGLVVLMDIRHPLKDLDQQMIQWAVESNIQVLVLLTKADKLASGARKAQLNMVREAVLAFNGDVQVEAFSSLKKQGVDKLRQKLDSWFSELAPVEEIQDGE</sequence>
<proteinExistence type="inferred from homology"/>
<organism>
    <name type="scientific">Salmonella agona (strain SL483)</name>
    <dbReference type="NCBI Taxonomy" id="454166"/>
    <lineage>
        <taxon>Bacteria</taxon>
        <taxon>Pseudomonadati</taxon>
        <taxon>Pseudomonadota</taxon>
        <taxon>Gammaproteobacteria</taxon>
        <taxon>Enterobacterales</taxon>
        <taxon>Enterobacteriaceae</taxon>
        <taxon>Salmonella</taxon>
    </lineage>
</organism>
<evidence type="ECO:0000255" key="1">
    <source>
        <dbReference type="HAMAP-Rule" id="MF_00321"/>
    </source>
</evidence>
<reference key="1">
    <citation type="journal article" date="2011" name="J. Bacteriol.">
        <title>Comparative genomics of 28 Salmonella enterica isolates: evidence for CRISPR-mediated adaptive sublineage evolution.</title>
        <authorList>
            <person name="Fricke W.F."/>
            <person name="Mammel M.K."/>
            <person name="McDermott P.F."/>
            <person name="Tartera C."/>
            <person name="White D.G."/>
            <person name="Leclerc J.E."/>
            <person name="Ravel J."/>
            <person name="Cebula T.A."/>
        </authorList>
    </citation>
    <scope>NUCLEOTIDE SEQUENCE [LARGE SCALE GENOMIC DNA]</scope>
    <source>
        <strain>SL483</strain>
    </source>
</reference>
<keyword id="KW-0131">Cell cycle</keyword>
<keyword id="KW-0132">Cell division</keyword>
<keyword id="KW-0342">GTP-binding</keyword>
<keyword id="KW-0460">Magnesium</keyword>
<keyword id="KW-0479">Metal-binding</keyword>
<keyword id="KW-0547">Nucleotide-binding</keyword>
<keyword id="KW-0717">Septation</keyword>
<protein>
    <recommendedName>
        <fullName evidence="1">Probable GTP-binding protein EngB</fullName>
    </recommendedName>
</protein>